<protein>
    <recommendedName>
        <fullName evidence="1">Polyamine aminopropyltransferase</fullName>
    </recommendedName>
    <alternativeName>
        <fullName evidence="1">Putrescine aminopropyltransferase</fullName>
        <shortName evidence="1">PAPT</shortName>
    </alternativeName>
    <alternativeName>
        <fullName evidence="1">Spermidine synthase</fullName>
        <shortName evidence="1">SPDS</shortName>
        <shortName evidence="1">SPDSY</shortName>
        <ecNumber evidence="1">2.5.1.16</ecNumber>
    </alternativeName>
</protein>
<gene>
    <name evidence="1" type="primary">speE</name>
    <name type="ordered locus">CV_4130</name>
</gene>
<evidence type="ECO:0000255" key="1">
    <source>
        <dbReference type="HAMAP-Rule" id="MF_00198"/>
    </source>
</evidence>
<feature type="chain" id="PRO_0000156474" description="Polyamine aminopropyltransferase">
    <location>
        <begin position="1"/>
        <end position="261"/>
    </location>
</feature>
<feature type="domain" description="PABS" evidence="1">
    <location>
        <begin position="1"/>
        <end position="219"/>
    </location>
</feature>
<feature type="active site" description="Proton acceptor" evidence="1">
    <location>
        <position position="142"/>
    </location>
</feature>
<feature type="binding site" evidence="1">
    <location>
        <position position="96"/>
    </location>
    <ligand>
        <name>S-methyl-5'-thioadenosine</name>
        <dbReference type="ChEBI" id="CHEBI:17509"/>
    </ligand>
</feature>
<feature type="binding site" evidence="1">
    <location>
        <begin position="124"/>
        <end position="125"/>
    </location>
    <ligand>
        <name>S-methyl-5'-thioadenosine</name>
        <dbReference type="ChEBI" id="CHEBI:17509"/>
    </ligand>
</feature>
<comment type="function">
    <text evidence="1">Catalyzes the irreversible transfer of a propylamine group from the amino donor S-adenosylmethioninamine (decarboxy-AdoMet) to putrescine (1,4-diaminobutane) to yield spermidine.</text>
</comment>
<comment type="catalytic activity">
    <reaction evidence="1">
        <text>S-adenosyl 3-(methylsulfanyl)propylamine + putrescine = S-methyl-5'-thioadenosine + spermidine + H(+)</text>
        <dbReference type="Rhea" id="RHEA:12721"/>
        <dbReference type="ChEBI" id="CHEBI:15378"/>
        <dbReference type="ChEBI" id="CHEBI:17509"/>
        <dbReference type="ChEBI" id="CHEBI:57443"/>
        <dbReference type="ChEBI" id="CHEBI:57834"/>
        <dbReference type="ChEBI" id="CHEBI:326268"/>
        <dbReference type="EC" id="2.5.1.16"/>
    </reaction>
</comment>
<comment type="pathway">
    <text evidence="1">Amine and polyamine biosynthesis; spermidine biosynthesis; spermidine from putrescine: step 1/1.</text>
</comment>
<comment type="subunit">
    <text evidence="1">Homodimer or homotetramer.</text>
</comment>
<comment type="subcellular location">
    <subcellularLocation>
        <location evidence="1">Cytoplasm</location>
    </subcellularLocation>
</comment>
<comment type="similarity">
    <text evidence="1">Belongs to the spermidine/spermine synthase family.</text>
</comment>
<name>SPEE_CHRVO</name>
<sequence length="261" mass="29356">MHPFRRRVRPAVEAMPEVEISEEGNIRSLHLGSETIQSSMDLDDPPDLVLSYSRAMMGFLLWNDDPKHILQIGLGGGSFARFIDEYLPDAVSVAVDINPQVIAVARAFFQLPEEGDFFEIVEADGADYVKIFRGSTDAILVDGFDGLQIVDALTTEDFFEDCKRALSPKGVFVTNWWSGDKRYQSFIERLLNVFEGRVIELPAATHGNVAVMAFRQSPSLTQWEALRKRADELEGRFGLEFGEFVNRLKQTNQQTAGHLLI</sequence>
<accession>Q7NQK7</accession>
<proteinExistence type="inferred from homology"/>
<keyword id="KW-0963">Cytoplasm</keyword>
<keyword id="KW-0620">Polyamine biosynthesis</keyword>
<keyword id="KW-1185">Reference proteome</keyword>
<keyword id="KW-0745">Spermidine biosynthesis</keyword>
<keyword id="KW-0808">Transferase</keyword>
<reference key="1">
    <citation type="journal article" date="2003" name="Proc. Natl. Acad. Sci. U.S.A.">
        <title>The complete genome sequence of Chromobacterium violaceum reveals remarkable and exploitable bacterial adaptability.</title>
        <authorList>
            <person name="Vasconcelos A.T.R."/>
            <person name="de Almeida D.F."/>
            <person name="Hungria M."/>
            <person name="Guimaraes C.T."/>
            <person name="Antonio R.V."/>
            <person name="Almeida F.C."/>
            <person name="de Almeida L.G.P."/>
            <person name="de Almeida R."/>
            <person name="Alves-Gomes J.A."/>
            <person name="Andrade E.M."/>
            <person name="Araripe J."/>
            <person name="de Araujo M.F.F."/>
            <person name="Astolfi-Filho S."/>
            <person name="Azevedo V."/>
            <person name="Baptista A.J."/>
            <person name="Bataus L.A.M."/>
            <person name="Batista J.S."/>
            <person name="Belo A."/>
            <person name="van den Berg C."/>
            <person name="Bogo M."/>
            <person name="Bonatto S."/>
            <person name="Bordignon J."/>
            <person name="Brigido M.M."/>
            <person name="Brito C.A."/>
            <person name="Brocchi M."/>
            <person name="Burity H.A."/>
            <person name="Camargo A.A."/>
            <person name="Cardoso D.D.P."/>
            <person name="Carneiro N.P."/>
            <person name="Carraro D.M."/>
            <person name="Carvalho C.M.B."/>
            <person name="Cascardo J.C.M."/>
            <person name="Cavada B.S."/>
            <person name="Chueire L.M.O."/>
            <person name="Creczynski-Pasa T.B."/>
            <person name="Cunha-Junior N.C."/>
            <person name="Fagundes N."/>
            <person name="Falcao C.L."/>
            <person name="Fantinatti F."/>
            <person name="Farias I.P."/>
            <person name="Felipe M.S.S."/>
            <person name="Ferrari L.P."/>
            <person name="Ferro J.A."/>
            <person name="Ferro M.I.T."/>
            <person name="Franco G.R."/>
            <person name="Freitas N.S.A."/>
            <person name="Furlan L.R."/>
            <person name="Gazzinelli R.T."/>
            <person name="Gomes E.A."/>
            <person name="Goncalves P.R."/>
            <person name="Grangeiro T.B."/>
            <person name="Grattapaglia D."/>
            <person name="Grisard E.C."/>
            <person name="Hanna E.S."/>
            <person name="Jardim S.N."/>
            <person name="Laurino J."/>
            <person name="Leoi L.C.T."/>
            <person name="Lima L.F.A."/>
            <person name="Loureiro M.F."/>
            <person name="Lyra M.C.C.P."/>
            <person name="Madeira H.M.F."/>
            <person name="Manfio G.P."/>
            <person name="Maranhao A.Q."/>
            <person name="Martins W.S."/>
            <person name="di Mauro S.M.Z."/>
            <person name="de Medeiros S.R.B."/>
            <person name="Meissner R.V."/>
            <person name="Moreira M.A.M."/>
            <person name="Nascimento F.F."/>
            <person name="Nicolas M.F."/>
            <person name="Oliveira J.G."/>
            <person name="Oliveira S.C."/>
            <person name="Paixao R.F.C."/>
            <person name="Parente J.A."/>
            <person name="Pedrosa F.O."/>
            <person name="Pena S.D.J."/>
            <person name="Pereira J.O."/>
            <person name="Pereira M."/>
            <person name="Pinto L.S.R.C."/>
            <person name="Pinto L.S."/>
            <person name="Porto J.I.R."/>
            <person name="Potrich D.P."/>
            <person name="Ramalho-Neto C.E."/>
            <person name="Reis A.M.M."/>
            <person name="Rigo L.U."/>
            <person name="Rondinelli E."/>
            <person name="Santos E.B.P."/>
            <person name="Santos F.R."/>
            <person name="Schneider M.P.C."/>
            <person name="Seuanez H.N."/>
            <person name="Silva A.M.R."/>
            <person name="da Silva A.L.C."/>
            <person name="Silva D.W."/>
            <person name="Silva R."/>
            <person name="Simoes I.C."/>
            <person name="Simon D."/>
            <person name="Soares C.M.A."/>
            <person name="Soares R.B.A."/>
            <person name="Souza E.M."/>
            <person name="Souza K.R.L."/>
            <person name="Souza R.C."/>
            <person name="Steffens M.B.R."/>
            <person name="Steindel M."/>
            <person name="Teixeira S.R."/>
            <person name="Urmenyi T."/>
            <person name="Vettore A."/>
            <person name="Wassem R."/>
            <person name="Zaha A."/>
            <person name="Simpson A.J.G."/>
        </authorList>
    </citation>
    <scope>NUCLEOTIDE SEQUENCE [LARGE SCALE GENOMIC DNA]</scope>
    <source>
        <strain>ATCC 12472 / DSM 30191 / JCM 1249 / CCUG 213 / NBRC 12614 / NCIMB 9131 / NCTC 9757 / MK</strain>
    </source>
</reference>
<dbReference type="EC" id="2.5.1.16" evidence="1"/>
<dbReference type="EMBL" id="AE016825">
    <property type="protein sequence ID" value="AAQ61791.1"/>
    <property type="molecule type" value="Genomic_DNA"/>
</dbReference>
<dbReference type="SMR" id="Q7NQK7"/>
<dbReference type="STRING" id="243365.CV_4130"/>
<dbReference type="KEGG" id="cvi:CV_4130"/>
<dbReference type="eggNOG" id="COG0421">
    <property type="taxonomic scope" value="Bacteria"/>
</dbReference>
<dbReference type="HOGENOM" id="CLU_060070_1_0_4"/>
<dbReference type="UniPathway" id="UPA00248">
    <property type="reaction ID" value="UER00314"/>
</dbReference>
<dbReference type="Proteomes" id="UP000001424">
    <property type="component" value="Chromosome"/>
</dbReference>
<dbReference type="GO" id="GO:0005737">
    <property type="term" value="C:cytoplasm"/>
    <property type="evidence" value="ECO:0007669"/>
    <property type="project" value="UniProtKB-SubCell"/>
</dbReference>
<dbReference type="GO" id="GO:0004766">
    <property type="term" value="F:spermidine synthase activity"/>
    <property type="evidence" value="ECO:0007669"/>
    <property type="project" value="UniProtKB-UniRule"/>
</dbReference>
<dbReference type="GO" id="GO:0010487">
    <property type="term" value="F:thermospermine synthase activity"/>
    <property type="evidence" value="ECO:0007669"/>
    <property type="project" value="UniProtKB-ARBA"/>
</dbReference>
<dbReference type="GO" id="GO:0008295">
    <property type="term" value="P:spermidine biosynthetic process"/>
    <property type="evidence" value="ECO:0007669"/>
    <property type="project" value="UniProtKB-UniRule"/>
</dbReference>
<dbReference type="CDD" id="cd02440">
    <property type="entry name" value="AdoMet_MTases"/>
    <property type="match status" value="1"/>
</dbReference>
<dbReference type="Gene3D" id="3.40.50.150">
    <property type="entry name" value="Vaccinia Virus protein VP39"/>
    <property type="match status" value="1"/>
</dbReference>
<dbReference type="HAMAP" id="MF_00198">
    <property type="entry name" value="Spermidine_synth"/>
    <property type="match status" value="1"/>
</dbReference>
<dbReference type="InterPro" id="IPR030374">
    <property type="entry name" value="PABS"/>
</dbReference>
<dbReference type="InterPro" id="IPR029063">
    <property type="entry name" value="SAM-dependent_MTases_sf"/>
</dbReference>
<dbReference type="InterPro" id="IPR001045">
    <property type="entry name" value="Spermi_synthase"/>
</dbReference>
<dbReference type="NCBIfam" id="NF003380">
    <property type="entry name" value="PRK04457.1"/>
    <property type="match status" value="1"/>
</dbReference>
<dbReference type="PANTHER" id="PTHR43317">
    <property type="entry name" value="THERMOSPERMINE SYNTHASE ACAULIS5"/>
    <property type="match status" value="1"/>
</dbReference>
<dbReference type="PANTHER" id="PTHR43317:SF1">
    <property type="entry name" value="THERMOSPERMINE SYNTHASE ACAULIS5"/>
    <property type="match status" value="1"/>
</dbReference>
<dbReference type="Pfam" id="PF01564">
    <property type="entry name" value="Spermine_synth"/>
    <property type="match status" value="1"/>
</dbReference>
<dbReference type="SUPFAM" id="SSF53335">
    <property type="entry name" value="S-adenosyl-L-methionine-dependent methyltransferases"/>
    <property type="match status" value="1"/>
</dbReference>
<dbReference type="PROSITE" id="PS51006">
    <property type="entry name" value="PABS_2"/>
    <property type="match status" value="1"/>
</dbReference>
<organism>
    <name type="scientific">Chromobacterium violaceum (strain ATCC 12472 / DSM 30191 / JCM 1249 / CCUG 213 / NBRC 12614 / NCIMB 9131 / NCTC 9757 / MK)</name>
    <dbReference type="NCBI Taxonomy" id="243365"/>
    <lineage>
        <taxon>Bacteria</taxon>
        <taxon>Pseudomonadati</taxon>
        <taxon>Pseudomonadota</taxon>
        <taxon>Betaproteobacteria</taxon>
        <taxon>Neisseriales</taxon>
        <taxon>Chromobacteriaceae</taxon>
        <taxon>Chromobacterium</taxon>
    </lineage>
</organism>